<proteinExistence type="evidence at transcript level"/>
<gene>
    <name type="primary">PHT4;2</name>
    <name type="ordered locus">Os05g0451100</name>
    <name type="ordered locus">LOC_Os05g37820</name>
    <name type="ORF">OJ1576_F01.6</name>
</gene>
<organism>
    <name type="scientific">Oryza sativa subsp. japonica</name>
    <name type="common">Rice</name>
    <dbReference type="NCBI Taxonomy" id="39947"/>
    <lineage>
        <taxon>Eukaryota</taxon>
        <taxon>Viridiplantae</taxon>
        <taxon>Streptophyta</taxon>
        <taxon>Embryophyta</taxon>
        <taxon>Tracheophyta</taxon>
        <taxon>Spermatophyta</taxon>
        <taxon>Magnoliopsida</taxon>
        <taxon>Liliopsida</taxon>
        <taxon>Poales</taxon>
        <taxon>Poaceae</taxon>
        <taxon>BOP clade</taxon>
        <taxon>Oryzoideae</taxon>
        <taxon>Oryzeae</taxon>
        <taxon>Oryzinae</taxon>
        <taxon>Oryza</taxon>
        <taxon>Oryza sativa</taxon>
    </lineage>
</organism>
<accession>Q53WP9</accession>
<accession>A0A0P0WN11</accession>
<keyword id="KW-0150">Chloroplast</keyword>
<keyword id="KW-0406">Ion transport</keyword>
<keyword id="KW-0472">Membrane</keyword>
<keyword id="KW-0934">Plastid</keyword>
<keyword id="KW-1185">Reference proteome</keyword>
<keyword id="KW-0809">Transit peptide</keyword>
<keyword id="KW-0812">Transmembrane</keyword>
<keyword id="KW-1133">Transmembrane helix</keyword>
<keyword id="KW-0813">Transport</keyword>
<name>PHT42_ORYSJ</name>
<comment type="function">
    <text evidence="1">Probable anion transporter.</text>
</comment>
<comment type="subcellular location">
    <subcellularLocation>
        <location evidence="3">Plastid</location>
        <location evidence="3">Chloroplast membrane</location>
        <topology evidence="3">Multi-pass membrane protein</topology>
    </subcellularLocation>
</comment>
<comment type="similarity">
    <text evidence="3">Belongs to the major facilitator superfamily. Sodium/anion cotransporter (TC 2.A.1.14) family.</text>
</comment>
<sequence>MASIRSCVSVNPAAAVTPVKYKSARVGAAGLDPKGLRISCSSSSSSLAAGGGDGCRDAGCASSSGRGSGVVGSVGDGWWGRRGGQRERAVAAMCSAGMEGVRHGAAAVASVPAASASALPERAKVVALVAAVMLLCNADRVVMSVAVVPFAAQYGWSSSFLGIVQSSFLWGYVFSSMVGGALADRYGGKKVMAGAAALWSLATFLTPWAASQSTIMLLAIRALFGLAEGVAFPTMSTFLPKWFPTHERATAVGISMGGFHLGNVISFLATPIIMSHIGLAGTFAFFASLGYLWLSVWLFNVESDPLDSRTISKSELQLILAGRSASKIQGSKFPSLREILSKIEMWAIIVANVVNNWGYFVLLSWMPVYFKTVYNVNLKQAAWFSAIPWAVMALSGYVAGASADFLIKSGFSVALVRKIMQSIGFIGPGVSLLCLRFAQTPSVAAVLMTIALSLSSFSQAGYFCNVQDIAPKYAGSLHGLTNGIGTVAAIVSTIGTGYFVQWLGSFQAFLTLTAVLYFSATVFYNTYATGDLIFD</sequence>
<feature type="transit peptide" description="Chloroplast" evidence="2">
    <location>
        <begin position="1"/>
        <end position="95"/>
    </location>
</feature>
<feature type="chain" id="PRO_0000383100" description="Probable anion transporter 2, chloroplastic">
    <location>
        <begin position="96"/>
        <end position="535"/>
    </location>
</feature>
<feature type="transmembrane region" description="Helical" evidence="2">
    <location>
        <begin position="125"/>
        <end position="145"/>
    </location>
</feature>
<feature type="transmembrane region" description="Helical" evidence="2">
    <location>
        <begin position="160"/>
        <end position="180"/>
    </location>
</feature>
<feature type="transmembrane region" description="Helical" evidence="2">
    <location>
        <begin position="191"/>
        <end position="211"/>
    </location>
</feature>
<feature type="transmembrane region" description="Helical" evidence="2">
    <location>
        <begin position="215"/>
        <end position="235"/>
    </location>
</feature>
<feature type="transmembrane region" description="Helical" evidence="2">
    <location>
        <begin position="254"/>
        <end position="274"/>
    </location>
</feature>
<feature type="transmembrane region" description="Helical" evidence="2">
    <location>
        <begin position="279"/>
        <end position="299"/>
    </location>
</feature>
<feature type="transmembrane region" description="Helical" evidence="2">
    <location>
        <begin position="343"/>
        <end position="363"/>
    </location>
</feature>
<feature type="transmembrane region" description="Helical" evidence="2">
    <location>
        <begin position="381"/>
        <end position="401"/>
    </location>
</feature>
<feature type="transmembrane region" description="Helical" evidence="2">
    <location>
        <begin position="413"/>
        <end position="433"/>
    </location>
</feature>
<feature type="transmembrane region" description="Helical" evidence="2">
    <location>
        <begin position="443"/>
        <end position="463"/>
    </location>
</feature>
<feature type="transmembrane region" description="Helical" evidence="2">
    <location>
        <begin position="483"/>
        <end position="503"/>
    </location>
</feature>
<feature type="transmembrane region" description="Helical" evidence="2">
    <location>
        <begin position="504"/>
        <end position="524"/>
    </location>
</feature>
<feature type="sequence conflict" description="In Ref. 5; AK120548." evidence="3" ref="5">
    <original>N</original>
    <variation>K</variation>
    <location>
        <position position="11"/>
    </location>
</feature>
<feature type="sequence conflict" description="In Ref. 5; AK120548." evidence="3" ref="5">
    <original>T</original>
    <variation>S</variation>
    <location>
        <position position="17"/>
    </location>
</feature>
<feature type="sequence conflict" description="In Ref. 5; AK120548." evidence="3" ref="5">
    <original>K</original>
    <variation>R</variation>
    <location>
        <position position="22"/>
    </location>
</feature>
<feature type="sequence conflict" description="In Ref. 5; AK120548." evidence="3" ref="5">
    <original>DPK</original>
    <variation>EPR</variation>
    <location>
        <begin position="32"/>
        <end position="34"/>
    </location>
</feature>
<feature type="sequence conflict" description="In Ref. 5; AK120548." evidence="3" ref="5">
    <original>L</original>
    <variation>P</variation>
    <location>
        <position position="223"/>
    </location>
</feature>
<protein>
    <recommendedName>
        <fullName>Probable anion transporter 2, chloroplastic</fullName>
    </recommendedName>
    <alternativeName>
        <fullName>Phosphate transporter 4;2</fullName>
    </alternativeName>
</protein>
<dbReference type="EMBL" id="AC097176">
    <property type="protein sequence ID" value="AAV59349.1"/>
    <property type="molecule type" value="Genomic_DNA"/>
</dbReference>
<dbReference type="EMBL" id="AP008211">
    <property type="protein sequence ID" value="BAF17619.1"/>
    <property type="molecule type" value="Genomic_DNA"/>
</dbReference>
<dbReference type="EMBL" id="AP014961">
    <property type="protein sequence ID" value="BAS94325.1"/>
    <property type="molecule type" value="Genomic_DNA"/>
</dbReference>
<dbReference type="EMBL" id="AK120548">
    <property type="status" value="NOT_ANNOTATED_CDS"/>
    <property type="molecule type" value="mRNA"/>
</dbReference>
<dbReference type="RefSeq" id="NP_001407364.1">
    <property type="nucleotide sequence ID" value="NM_001420435.1"/>
</dbReference>
<dbReference type="RefSeq" id="XP_015640020.1">
    <property type="nucleotide sequence ID" value="XM_015784534.1"/>
</dbReference>
<dbReference type="SMR" id="Q53WP9"/>
<dbReference type="FunCoup" id="Q53WP9">
    <property type="interactions" value="285"/>
</dbReference>
<dbReference type="STRING" id="39947.Q53WP9"/>
<dbReference type="PaxDb" id="39947-Q53WP9"/>
<dbReference type="EnsemblPlants" id="Os05t0451100-01">
    <property type="protein sequence ID" value="Os05t0451100-01"/>
    <property type="gene ID" value="Os05g0451100"/>
</dbReference>
<dbReference type="GeneID" id="4338960"/>
<dbReference type="Gramene" id="Os05t0451100-01">
    <property type="protein sequence ID" value="Os05t0451100-01"/>
    <property type="gene ID" value="Os05g0451100"/>
</dbReference>
<dbReference type="KEGG" id="dosa:Os05g0451100"/>
<dbReference type="eggNOG" id="KOG2532">
    <property type="taxonomic scope" value="Eukaryota"/>
</dbReference>
<dbReference type="HOGENOM" id="CLU_001265_5_11_1"/>
<dbReference type="InParanoid" id="Q53WP9"/>
<dbReference type="OMA" id="VTTIFWN"/>
<dbReference type="OrthoDB" id="2250022at2759"/>
<dbReference type="Proteomes" id="UP000000763">
    <property type="component" value="Chromosome 5"/>
</dbReference>
<dbReference type="Proteomes" id="UP000059680">
    <property type="component" value="Chromosome 5"/>
</dbReference>
<dbReference type="GO" id="GO:0031969">
    <property type="term" value="C:chloroplast membrane"/>
    <property type="evidence" value="ECO:0007669"/>
    <property type="project" value="UniProtKB-SubCell"/>
</dbReference>
<dbReference type="GO" id="GO:0009536">
    <property type="term" value="C:plastid"/>
    <property type="evidence" value="ECO:0000318"/>
    <property type="project" value="GO_Central"/>
</dbReference>
<dbReference type="GO" id="GO:0005315">
    <property type="term" value="F:phosphate transmembrane transporter activity"/>
    <property type="evidence" value="ECO:0000318"/>
    <property type="project" value="GO_Central"/>
</dbReference>
<dbReference type="GO" id="GO:0006811">
    <property type="term" value="P:monoatomic ion transport"/>
    <property type="evidence" value="ECO:0007669"/>
    <property type="project" value="UniProtKB-KW"/>
</dbReference>
<dbReference type="CDD" id="cd17380">
    <property type="entry name" value="MFS_SLC17A9_like"/>
    <property type="match status" value="1"/>
</dbReference>
<dbReference type="FunFam" id="1.20.1250.20:FF:000131">
    <property type="entry name" value="Probable anion transporter 3, chloroplastic"/>
    <property type="match status" value="1"/>
</dbReference>
<dbReference type="FunFam" id="1.20.1250.20:FF:000142">
    <property type="entry name" value="probable anion transporter 3, chloroplastic"/>
    <property type="match status" value="1"/>
</dbReference>
<dbReference type="Gene3D" id="1.20.1250.20">
    <property type="entry name" value="MFS general substrate transporter like domains"/>
    <property type="match status" value="2"/>
</dbReference>
<dbReference type="InterPro" id="IPR011701">
    <property type="entry name" value="MFS"/>
</dbReference>
<dbReference type="InterPro" id="IPR020846">
    <property type="entry name" value="MFS_dom"/>
</dbReference>
<dbReference type="InterPro" id="IPR050382">
    <property type="entry name" value="MFS_Na/Anion_cotransporter"/>
</dbReference>
<dbReference type="InterPro" id="IPR036259">
    <property type="entry name" value="MFS_trans_sf"/>
</dbReference>
<dbReference type="InterPro" id="IPR044777">
    <property type="entry name" value="SLC17A9-like"/>
</dbReference>
<dbReference type="PANTHER" id="PTHR11662:SF399">
    <property type="entry name" value="FI19708P1-RELATED"/>
    <property type="match status" value="1"/>
</dbReference>
<dbReference type="PANTHER" id="PTHR11662">
    <property type="entry name" value="SOLUTE CARRIER FAMILY 17"/>
    <property type="match status" value="1"/>
</dbReference>
<dbReference type="Pfam" id="PF07690">
    <property type="entry name" value="MFS_1"/>
    <property type="match status" value="1"/>
</dbReference>
<dbReference type="SUPFAM" id="SSF103473">
    <property type="entry name" value="MFS general substrate transporter"/>
    <property type="match status" value="1"/>
</dbReference>
<dbReference type="PROSITE" id="PS50850">
    <property type="entry name" value="MFS"/>
    <property type="match status" value="1"/>
</dbReference>
<reference key="1">
    <citation type="journal article" date="2005" name="Mol. Genet. Genomics">
        <title>A fine physical map of the rice chromosome 5.</title>
        <authorList>
            <person name="Cheng C.-H."/>
            <person name="Chung M.C."/>
            <person name="Liu S.-M."/>
            <person name="Chen S.-K."/>
            <person name="Kao F.Y."/>
            <person name="Lin S.-J."/>
            <person name="Hsiao S.-H."/>
            <person name="Tseng I.C."/>
            <person name="Hsing Y.-I.C."/>
            <person name="Wu H.-P."/>
            <person name="Chen C.-S."/>
            <person name="Shaw J.-F."/>
            <person name="Wu J."/>
            <person name="Matsumoto T."/>
            <person name="Sasaki T."/>
            <person name="Chen H.-C."/>
            <person name="Chow T.-Y."/>
        </authorList>
    </citation>
    <scope>NUCLEOTIDE SEQUENCE [LARGE SCALE GENOMIC DNA]</scope>
    <source>
        <strain>cv. Nipponbare</strain>
    </source>
</reference>
<reference key="2">
    <citation type="journal article" date="2005" name="Nature">
        <title>The map-based sequence of the rice genome.</title>
        <authorList>
            <consortium name="International rice genome sequencing project (IRGSP)"/>
        </authorList>
    </citation>
    <scope>NUCLEOTIDE SEQUENCE [LARGE SCALE GENOMIC DNA]</scope>
    <source>
        <strain>cv. Nipponbare</strain>
    </source>
</reference>
<reference key="3">
    <citation type="journal article" date="2008" name="Nucleic Acids Res.">
        <title>The rice annotation project database (RAP-DB): 2008 update.</title>
        <authorList>
            <consortium name="The rice annotation project (RAP)"/>
        </authorList>
    </citation>
    <scope>GENOME REANNOTATION</scope>
    <source>
        <strain>cv. Nipponbare</strain>
    </source>
</reference>
<reference key="4">
    <citation type="journal article" date="2013" name="Rice">
        <title>Improvement of the Oryza sativa Nipponbare reference genome using next generation sequence and optical map data.</title>
        <authorList>
            <person name="Kawahara Y."/>
            <person name="de la Bastide M."/>
            <person name="Hamilton J.P."/>
            <person name="Kanamori H."/>
            <person name="McCombie W.R."/>
            <person name="Ouyang S."/>
            <person name="Schwartz D.C."/>
            <person name="Tanaka T."/>
            <person name="Wu J."/>
            <person name="Zhou S."/>
            <person name="Childs K.L."/>
            <person name="Davidson R.M."/>
            <person name="Lin H."/>
            <person name="Quesada-Ocampo L."/>
            <person name="Vaillancourt B."/>
            <person name="Sakai H."/>
            <person name="Lee S.S."/>
            <person name="Kim J."/>
            <person name="Numa H."/>
            <person name="Itoh T."/>
            <person name="Buell C.R."/>
            <person name="Matsumoto T."/>
        </authorList>
    </citation>
    <scope>GENOME REANNOTATION</scope>
    <source>
        <strain>cv. Nipponbare</strain>
    </source>
</reference>
<reference key="5">
    <citation type="journal article" date="2003" name="Science">
        <title>Collection, mapping, and annotation of over 28,000 cDNA clones from japonica rice.</title>
        <authorList>
            <consortium name="The rice full-length cDNA consortium"/>
        </authorList>
    </citation>
    <scope>NUCLEOTIDE SEQUENCE [LARGE SCALE MRNA]</scope>
    <source>
        <strain>cv. Nipponbare</strain>
    </source>
</reference>
<reference key="6">
    <citation type="journal article" date="2008" name="Plant Signal. Behav.">
        <title>Differential expression and phylogenetic analysis suggest specialization of plastid-localized members of the PHT4 phosphate transporter family for photosynthetic and heterotrophic tissues.</title>
        <authorList>
            <person name="Guo B."/>
            <person name="Irigoyen S."/>
            <person name="Fowler T.B."/>
            <person name="Versaw W.K."/>
        </authorList>
    </citation>
    <scope>GENE FAMILY</scope>
    <scope>NOMENCLATURE</scope>
</reference>
<evidence type="ECO:0000250" key="1"/>
<evidence type="ECO:0000255" key="2"/>
<evidence type="ECO:0000305" key="3"/>